<organism>
    <name type="scientific">Corynebacterium kroppenstedtii (strain DSM 44385 / JCM 11950 / CIP 105744 / CCUG 35717)</name>
    <dbReference type="NCBI Taxonomy" id="645127"/>
    <lineage>
        <taxon>Bacteria</taxon>
        <taxon>Bacillati</taxon>
        <taxon>Actinomycetota</taxon>
        <taxon>Actinomycetes</taxon>
        <taxon>Mycobacteriales</taxon>
        <taxon>Corynebacteriaceae</taxon>
        <taxon>Corynebacterium</taxon>
    </lineage>
</organism>
<feature type="chain" id="PRO_1000213386" description="2,3-bisphosphoglycerate-dependent phosphoglycerate mutase">
    <location>
        <begin position="1"/>
        <end position="248"/>
    </location>
</feature>
<feature type="active site" description="Tele-phosphohistidine intermediate" evidence="1">
    <location>
        <position position="11"/>
    </location>
</feature>
<feature type="active site" description="Proton donor/acceptor" evidence="1">
    <location>
        <position position="89"/>
    </location>
</feature>
<feature type="binding site" evidence="1">
    <location>
        <begin position="10"/>
        <end position="17"/>
    </location>
    <ligand>
        <name>substrate</name>
    </ligand>
</feature>
<feature type="binding site" evidence="1">
    <location>
        <begin position="23"/>
        <end position="24"/>
    </location>
    <ligand>
        <name>substrate</name>
    </ligand>
</feature>
<feature type="binding site" evidence="1">
    <location>
        <position position="62"/>
    </location>
    <ligand>
        <name>substrate</name>
    </ligand>
</feature>
<feature type="binding site" evidence="1">
    <location>
        <begin position="89"/>
        <end position="92"/>
    </location>
    <ligand>
        <name>substrate</name>
    </ligand>
</feature>
<feature type="binding site" evidence="1">
    <location>
        <position position="100"/>
    </location>
    <ligand>
        <name>substrate</name>
    </ligand>
</feature>
<feature type="binding site" evidence="1">
    <location>
        <begin position="116"/>
        <end position="117"/>
    </location>
    <ligand>
        <name>substrate</name>
    </ligand>
</feature>
<feature type="binding site" evidence="1">
    <location>
        <begin position="183"/>
        <end position="184"/>
    </location>
    <ligand>
        <name>substrate</name>
    </ligand>
</feature>
<feature type="site" description="Transition state stabilizer" evidence="1">
    <location>
        <position position="182"/>
    </location>
</feature>
<sequence length="248" mass="27454">MSNGKLILLRHGQSQWNSTNQFTGWVDVDLTEKGEAEAKRGGELIKEKGLHPEVLYTSLLRRAIRTADIALNAADRLWIPVIRDWRLNERHYGALQGLNKADTKEKYGNEKFMAWRRSYDTRPPELEDGAEYSQSDDPRYANLDSVPKTECLKDVVARFVPYFKEEILPRAQKGQTVLIAAHGNSLRALVKHLDNISDDDIAGLNIPTGIPLVYEIAEDGSVVNPGGTYLDPEAAAAGAAAVANQGSK</sequence>
<name>GPMA_CORK4</name>
<protein>
    <recommendedName>
        <fullName evidence="1">2,3-bisphosphoglycerate-dependent phosphoglycerate mutase</fullName>
        <shortName evidence="1">BPG-dependent PGAM</shortName>
        <shortName evidence="1">PGAM</shortName>
        <shortName evidence="1">Phosphoglyceromutase</shortName>
        <shortName evidence="1">dPGM</shortName>
        <ecNumber evidence="1">5.4.2.11</ecNumber>
    </recommendedName>
</protein>
<comment type="function">
    <text evidence="1">Catalyzes the interconversion of 2-phosphoglycerate and 3-phosphoglycerate.</text>
</comment>
<comment type="catalytic activity">
    <reaction evidence="1">
        <text>(2R)-2-phosphoglycerate = (2R)-3-phosphoglycerate</text>
        <dbReference type="Rhea" id="RHEA:15901"/>
        <dbReference type="ChEBI" id="CHEBI:58272"/>
        <dbReference type="ChEBI" id="CHEBI:58289"/>
        <dbReference type="EC" id="5.4.2.11"/>
    </reaction>
</comment>
<comment type="pathway">
    <text evidence="1">Carbohydrate degradation; glycolysis; pyruvate from D-glyceraldehyde 3-phosphate: step 3/5.</text>
</comment>
<comment type="similarity">
    <text evidence="1">Belongs to the phosphoglycerate mutase family. BPG-dependent PGAM subfamily.</text>
</comment>
<accession>C4LLD4</accession>
<dbReference type="EC" id="5.4.2.11" evidence="1"/>
<dbReference type="EMBL" id="CP001620">
    <property type="protein sequence ID" value="ACR18639.1"/>
    <property type="molecule type" value="Genomic_DNA"/>
</dbReference>
<dbReference type="RefSeq" id="WP_012732526.1">
    <property type="nucleotide sequence ID" value="NC_012704.1"/>
</dbReference>
<dbReference type="SMR" id="C4LLD4"/>
<dbReference type="STRING" id="645127.ckrop_1925"/>
<dbReference type="KEGG" id="ckp:ckrop_1925"/>
<dbReference type="eggNOG" id="COG0588">
    <property type="taxonomic scope" value="Bacteria"/>
</dbReference>
<dbReference type="HOGENOM" id="CLU_033323_1_1_11"/>
<dbReference type="OrthoDB" id="9781415at2"/>
<dbReference type="UniPathway" id="UPA00109">
    <property type="reaction ID" value="UER00186"/>
</dbReference>
<dbReference type="Proteomes" id="UP000001473">
    <property type="component" value="Chromosome"/>
</dbReference>
<dbReference type="GO" id="GO:0004619">
    <property type="term" value="F:phosphoglycerate mutase activity"/>
    <property type="evidence" value="ECO:0007669"/>
    <property type="project" value="UniProtKB-EC"/>
</dbReference>
<dbReference type="GO" id="GO:0006094">
    <property type="term" value="P:gluconeogenesis"/>
    <property type="evidence" value="ECO:0007669"/>
    <property type="project" value="UniProtKB-UniRule"/>
</dbReference>
<dbReference type="GO" id="GO:0006096">
    <property type="term" value="P:glycolytic process"/>
    <property type="evidence" value="ECO:0007669"/>
    <property type="project" value="UniProtKB-UniRule"/>
</dbReference>
<dbReference type="CDD" id="cd07067">
    <property type="entry name" value="HP_PGM_like"/>
    <property type="match status" value="1"/>
</dbReference>
<dbReference type="FunFam" id="3.40.50.1240:FF:000003">
    <property type="entry name" value="2,3-bisphosphoglycerate-dependent phosphoglycerate mutase"/>
    <property type="match status" value="1"/>
</dbReference>
<dbReference type="Gene3D" id="3.40.50.1240">
    <property type="entry name" value="Phosphoglycerate mutase-like"/>
    <property type="match status" value="1"/>
</dbReference>
<dbReference type="HAMAP" id="MF_01039">
    <property type="entry name" value="PGAM_GpmA"/>
    <property type="match status" value="1"/>
</dbReference>
<dbReference type="InterPro" id="IPR013078">
    <property type="entry name" value="His_Pase_superF_clade-1"/>
</dbReference>
<dbReference type="InterPro" id="IPR029033">
    <property type="entry name" value="His_PPase_superfam"/>
</dbReference>
<dbReference type="InterPro" id="IPR001345">
    <property type="entry name" value="PG/BPGM_mutase_AS"/>
</dbReference>
<dbReference type="InterPro" id="IPR005952">
    <property type="entry name" value="Phosphogly_mut1"/>
</dbReference>
<dbReference type="NCBIfam" id="TIGR01258">
    <property type="entry name" value="pgm_1"/>
    <property type="match status" value="1"/>
</dbReference>
<dbReference type="NCBIfam" id="NF010713">
    <property type="entry name" value="PRK14115.1"/>
    <property type="match status" value="1"/>
</dbReference>
<dbReference type="NCBIfam" id="NF010718">
    <property type="entry name" value="PRK14120.1"/>
    <property type="match status" value="1"/>
</dbReference>
<dbReference type="PANTHER" id="PTHR11931">
    <property type="entry name" value="PHOSPHOGLYCERATE MUTASE"/>
    <property type="match status" value="1"/>
</dbReference>
<dbReference type="Pfam" id="PF00300">
    <property type="entry name" value="His_Phos_1"/>
    <property type="match status" value="2"/>
</dbReference>
<dbReference type="PIRSF" id="PIRSF000709">
    <property type="entry name" value="6PFK_2-Ptase"/>
    <property type="match status" value="1"/>
</dbReference>
<dbReference type="SMART" id="SM00855">
    <property type="entry name" value="PGAM"/>
    <property type="match status" value="1"/>
</dbReference>
<dbReference type="SUPFAM" id="SSF53254">
    <property type="entry name" value="Phosphoglycerate mutase-like"/>
    <property type="match status" value="1"/>
</dbReference>
<dbReference type="PROSITE" id="PS00175">
    <property type="entry name" value="PG_MUTASE"/>
    <property type="match status" value="1"/>
</dbReference>
<reference key="1">
    <citation type="journal article" date="2008" name="J. Biotechnol.">
        <title>Ultrafast pyrosequencing of Corynebacterium kroppenstedtii DSM44385 revealed insights into the physiology of a lipophilic corynebacterium that lacks mycolic acids.</title>
        <authorList>
            <person name="Tauch A."/>
            <person name="Schneider J."/>
            <person name="Szczepanowski R."/>
            <person name="Tilker A."/>
            <person name="Viehoever P."/>
            <person name="Gartemann K.-H."/>
            <person name="Arnold W."/>
            <person name="Blom J."/>
            <person name="Brinkrolf K."/>
            <person name="Brune I."/>
            <person name="Goetker S."/>
            <person name="Weisshaar B."/>
            <person name="Goesmann A."/>
            <person name="Droege M."/>
            <person name="Puehler A."/>
        </authorList>
    </citation>
    <scope>NUCLEOTIDE SEQUENCE [LARGE SCALE GENOMIC DNA]</scope>
    <source>
        <strain>DSM 44385 / JCM 11950 / CIP 105744 / CCUG 35717</strain>
    </source>
</reference>
<gene>
    <name evidence="1" type="primary">gpmA</name>
    <name type="ordered locus">ckrop_1925</name>
</gene>
<keyword id="KW-0312">Gluconeogenesis</keyword>
<keyword id="KW-0324">Glycolysis</keyword>
<keyword id="KW-0413">Isomerase</keyword>
<keyword id="KW-1185">Reference proteome</keyword>
<proteinExistence type="inferred from homology"/>
<evidence type="ECO:0000255" key="1">
    <source>
        <dbReference type="HAMAP-Rule" id="MF_01039"/>
    </source>
</evidence>